<keyword id="KW-0025">Alternative splicing</keyword>
<keyword id="KW-1015">Disulfide bond</keyword>
<keyword id="KW-1032">Host cell membrane</keyword>
<keyword id="KW-1043">Host membrane</keyword>
<keyword id="KW-0945">Host-virus interaction</keyword>
<keyword id="KW-0375">Hydrogen ion transport</keyword>
<keyword id="KW-1083">Inhibition of host autophagy by virus</keyword>
<keyword id="KW-0407">Ion channel</keyword>
<keyword id="KW-0406">Ion transport</keyword>
<keyword id="KW-0449">Lipoprotein</keyword>
<keyword id="KW-0472">Membrane</keyword>
<keyword id="KW-0564">Palmitate</keyword>
<keyword id="KW-0597">Phosphoprotein</keyword>
<keyword id="KW-0735">Signal-anchor</keyword>
<keyword id="KW-0812">Transmembrane</keyword>
<keyword id="KW-1133">Transmembrane helix</keyword>
<keyword id="KW-0813">Transport</keyword>
<keyword id="KW-1182">Viral ion channel</keyword>
<keyword id="KW-0946">Virion</keyword>
<evidence type="ECO:0000255" key="1">
    <source>
        <dbReference type="HAMAP-Rule" id="MF_04069"/>
    </source>
</evidence>
<evidence type="ECO:0000256" key="2">
    <source>
        <dbReference type="SAM" id="MobiDB-lite"/>
    </source>
</evidence>
<comment type="function">
    <text evidence="1">Forms a proton-selective ion channel that is necessary for the efficient release of the viral genome during virus entry. After attaching to the cell surface, the virion enters the cell by endocytosis. Acidification of the endosome triggers M2 ion channel activity. The influx of protons into virion interior is believed to disrupt interactions between the viral ribonucleoprotein (RNP), matrix protein 1 (M1), and lipid bilayers, thereby freeing the viral genome from interaction with viral proteins and enabling RNA segments to migrate to the host cell nucleus, where influenza virus RNA transcription and replication occur. Also plays a role in viral proteins secretory pathway. Elevates the intravesicular pH of normally acidic compartments, such as trans-Golgi network, preventing newly formed hemagglutinin from premature switching to the fusion-active conformation.</text>
</comment>
<comment type="activity regulation">
    <text>The M2 protein from most influenza A strains is inhibited by amantadine and rimantadine, resulting in viral uncoating incapacity. Emergence of amantadine-resistant variants is usually rapid.</text>
</comment>
<comment type="subunit">
    <text evidence="1">Homotetramer; composed of two disulfide-linked dimers held together by non-covalent interactions. May interact with matrix protein 1.</text>
</comment>
<comment type="subcellular location">
    <subcellularLocation>
        <location evidence="1">Virion membrane</location>
    </subcellularLocation>
    <subcellularLocation>
        <location evidence="1">Host apical cell membrane</location>
        <topology evidence="1">Single-pass type III membrane protein</topology>
    </subcellularLocation>
    <text evidence="1">Abundantly expressed at the apical plasma membrane in infected polarized epithelial cells, in close proximity to budding and assembled virions. Minor component of virions (only 16-20 molecules/virion).</text>
</comment>
<comment type="alternative products">
    <event type="alternative splicing"/>
    <isoform>
        <id>P08382-1</id>
        <name>M2</name>
        <sequence type="displayed"/>
    </isoform>
    <isoform>
        <id>P08381-1</id>
        <name>M1</name>
        <sequence type="external"/>
    </isoform>
    <text>Only the first 9 residues are shared by the 2 isoforms.</text>
</comment>
<comment type="domain">
    <text evidence="1">Cytoplasmic tail plays an important role in virion assembly and morphogenesis.</text>
</comment>
<comment type="miscellaneous">
    <text evidence="1">When the channel is activated, one or more imidazole moieties of His-37 probably become bi-protonated.</text>
</comment>
<comment type="similarity">
    <text evidence="1">Belongs to the influenza viruses matrix protein M2 family.</text>
</comment>
<gene>
    <name evidence="1" type="primary">M</name>
</gene>
<reference key="1">
    <citation type="journal article" date="1986" name="J. Virol.">
        <title>Characterization of a gene coding for M proteins which is involved in host range restriction of an avian influenza A virus in monkeys.</title>
        <authorList>
            <person name="Buckler-White A.J."/>
            <person name="Naeve C.W."/>
            <person name="Murphy B.R."/>
        </authorList>
    </citation>
    <scope>NUCLEOTIDE SEQUENCE [GENOMIC RNA]</scope>
</reference>
<reference key="2">
    <citation type="journal article" date="2004" name="Virus Res.">
        <title>Assembly and budding of influenza virus.</title>
        <authorList>
            <person name="Nayak D.P."/>
            <person name="Hui E.K."/>
            <person name="Barman S."/>
        </authorList>
    </citation>
    <scope>REVIEW</scope>
</reference>
<reference key="3">
    <citation type="journal article" date="2003" name="FEBS Lett.">
        <title>Proton conduction through the M2 protein of the influenza A virus; a quantitative, mechanistic analysis of experimental data.</title>
        <authorList>
            <person name="Lear J.D."/>
        </authorList>
    </citation>
    <scope>REVIEW</scope>
</reference>
<reference key="4">
    <citation type="journal article" date="2003" name="FEBS Lett.">
        <title>Computational studies of proton transport through the M2 channel.</title>
        <authorList>
            <person name="Wu Y."/>
            <person name="Voth G.A."/>
        </authorList>
    </citation>
    <scope>REVIEW</scope>
</reference>
<dbReference type="EMBL" id="M12699">
    <property type="protein sequence ID" value="AAA43312.1"/>
    <property type="molecule type" value="Genomic_RNA"/>
</dbReference>
<dbReference type="PIR" id="B29511">
    <property type="entry name" value="MFIV2M"/>
</dbReference>
<dbReference type="SMR" id="P08382"/>
<dbReference type="Proteomes" id="UP000098172">
    <property type="component" value="Genome"/>
</dbReference>
<dbReference type="GO" id="GO:0020002">
    <property type="term" value="C:host cell plasma membrane"/>
    <property type="evidence" value="ECO:0007669"/>
    <property type="project" value="UniProtKB-SubCell"/>
</dbReference>
<dbReference type="GO" id="GO:0016020">
    <property type="term" value="C:membrane"/>
    <property type="evidence" value="ECO:0007669"/>
    <property type="project" value="UniProtKB-UniRule"/>
</dbReference>
<dbReference type="GO" id="GO:0055036">
    <property type="term" value="C:virion membrane"/>
    <property type="evidence" value="ECO:0007669"/>
    <property type="project" value="UniProtKB-SubCell"/>
</dbReference>
<dbReference type="GO" id="GO:0005216">
    <property type="term" value="F:monoatomic ion channel activity"/>
    <property type="evidence" value="ECO:0007669"/>
    <property type="project" value="UniProtKB-UniRule"/>
</dbReference>
<dbReference type="GO" id="GO:0015078">
    <property type="term" value="F:proton transmembrane transporter activity"/>
    <property type="evidence" value="ECO:0007669"/>
    <property type="project" value="UniProtKB-UniRule"/>
</dbReference>
<dbReference type="GO" id="GO:0051259">
    <property type="term" value="P:protein complex oligomerization"/>
    <property type="evidence" value="ECO:0007669"/>
    <property type="project" value="UniProtKB-UniRule"/>
</dbReference>
<dbReference type="GO" id="GO:0044694">
    <property type="term" value="P:symbiont genome entry into host cell via pore formation in plasma membrane"/>
    <property type="evidence" value="ECO:0007669"/>
    <property type="project" value="UniProtKB-UniRule"/>
</dbReference>
<dbReference type="GO" id="GO:0140321">
    <property type="term" value="P:symbiont-mediated suppression of host autophagy"/>
    <property type="evidence" value="ECO:0007669"/>
    <property type="project" value="UniProtKB-KW"/>
</dbReference>
<dbReference type="Gene3D" id="6.10.250.1640">
    <property type="match status" value="1"/>
</dbReference>
<dbReference type="HAMAP" id="MF_04069">
    <property type="entry name" value="INFV_M2"/>
    <property type="match status" value="1"/>
</dbReference>
<dbReference type="InterPro" id="IPR002089">
    <property type="entry name" value="Flu_M2"/>
</dbReference>
<dbReference type="Pfam" id="PF00599">
    <property type="entry name" value="Flu_M2"/>
    <property type="match status" value="1"/>
</dbReference>
<name>M2_I78A3</name>
<protein>
    <recommendedName>
        <fullName evidence="1">Matrix protein 2</fullName>
    </recommendedName>
    <alternativeName>
        <fullName evidence="1">Proton channel protein M2</fullName>
    </alternativeName>
</protein>
<sequence length="97" mass="11158">MSLLTEVETPTRNGWECKCSDSSDPLVIAASIIGILHLILWILDRLFFKCIYRRLKYGLKRGPSTEGVPESMREEYRQEQQSAVDVDDGHFVNIELE</sequence>
<organismHost>
    <name type="scientific">Aves</name>
    <dbReference type="NCBI Taxonomy" id="8782"/>
</organismHost>
<organismHost>
    <name type="scientific">Homo sapiens</name>
    <name type="common">Human</name>
    <dbReference type="NCBI Taxonomy" id="9606"/>
</organismHost>
<proteinExistence type="inferred from homology"/>
<accession>P08382</accession>
<organism>
    <name type="scientific">Influenza A virus (strain A/Mallard/New York/6750/1978 H2N2)</name>
    <dbReference type="NCBI Taxonomy" id="384502"/>
    <lineage>
        <taxon>Viruses</taxon>
        <taxon>Riboviria</taxon>
        <taxon>Orthornavirae</taxon>
        <taxon>Negarnaviricota</taxon>
        <taxon>Polyploviricotina</taxon>
        <taxon>Insthoviricetes</taxon>
        <taxon>Articulavirales</taxon>
        <taxon>Orthomyxoviridae</taxon>
        <taxon>Alphainfluenzavirus</taxon>
        <taxon>Alphainfluenzavirus influenzae</taxon>
        <taxon>Influenza A virus</taxon>
    </lineage>
</organism>
<feature type="chain" id="PRO_0000078888" description="Matrix protein 2">
    <location>
        <begin position="1"/>
        <end position="97"/>
    </location>
</feature>
<feature type="topological domain" description="Virion surface" evidence="1">
    <location>
        <begin position="1"/>
        <end position="22"/>
    </location>
</feature>
<feature type="transmembrane region" description="Helical; Signal-anchor for type III membrane protein" evidence="1">
    <location>
        <begin position="23"/>
        <end position="43"/>
    </location>
</feature>
<feature type="topological domain" description="Intravirion" evidence="1">
    <location>
        <begin position="44"/>
        <end position="97"/>
    </location>
</feature>
<feature type="region of interest" description="Disordered" evidence="2">
    <location>
        <begin position="60"/>
        <end position="83"/>
    </location>
</feature>
<feature type="site" description="Essential for channel activity, possibly by being protonated during channel activation, and by forming the channel gate and the selective filter" evidence="1">
    <location>
        <position position="37"/>
    </location>
</feature>
<feature type="site" description="Seems to be involved in pH gating" evidence="1">
    <location>
        <position position="41"/>
    </location>
</feature>
<feature type="modified residue" description="Phosphoserine; by host" evidence="1">
    <location>
        <position position="64"/>
    </location>
</feature>
<feature type="modified residue" description="Phosphoserine; by host" evidence="1">
    <location>
        <position position="82"/>
    </location>
</feature>
<feature type="lipid moiety-binding region" description="S-palmitoyl cysteine; by host" evidence="1">
    <location>
        <position position="50"/>
    </location>
</feature>
<feature type="disulfide bond" description="Interchain (with C-17)" evidence="1">
    <location>
        <position position="17"/>
    </location>
</feature>
<feature type="disulfide bond" description="Interchain (with C-19)" evidence="1">
    <location>
        <position position="19"/>
    </location>
</feature>